<reference key="1">
    <citation type="journal article" date="2007" name="J. Bacteriol.">
        <title>Complete genome sequence of Haemophilus somnus (Histophilus somni) strain 129Pt and comparison to Haemophilus ducreyi 35000HP and Haemophilus influenzae Rd.</title>
        <authorList>
            <person name="Challacombe J.F."/>
            <person name="Duncan A.J."/>
            <person name="Brettin T.S."/>
            <person name="Bruce D."/>
            <person name="Chertkov O."/>
            <person name="Detter J.C."/>
            <person name="Han C.S."/>
            <person name="Misra M."/>
            <person name="Richardson P."/>
            <person name="Tapia R."/>
            <person name="Thayer N."/>
            <person name="Xie G."/>
            <person name="Inzana T.J."/>
        </authorList>
    </citation>
    <scope>NUCLEOTIDE SEQUENCE [LARGE SCALE GENOMIC DNA]</scope>
    <source>
        <strain>129Pt</strain>
    </source>
</reference>
<proteinExistence type="inferred from homology"/>
<feature type="chain" id="PRO_1000003363" description="3-deoxy-manno-octulosonate cytidylyltransferase">
    <location>
        <begin position="1"/>
        <end position="256"/>
    </location>
</feature>
<dbReference type="EC" id="2.7.7.38" evidence="1"/>
<dbReference type="EMBL" id="CP000436">
    <property type="protein sequence ID" value="ABI24935.1"/>
    <property type="molecule type" value="Genomic_DNA"/>
</dbReference>
<dbReference type="SMR" id="Q0I2X5"/>
<dbReference type="KEGG" id="hso:HS_0658"/>
<dbReference type="eggNOG" id="COG1212">
    <property type="taxonomic scope" value="Bacteria"/>
</dbReference>
<dbReference type="HOGENOM" id="CLU_065038_1_0_6"/>
<dbReference type="UniPathway" id="UPA00030"/>
<dbReference type="UniPathway" id="UPA00358">
    <property type="reaction ID" value="UER00476"/>
</dbReference>
<dbReference type="GO" id="GO:0005829">
    <property type="term" value="C:cytosol"/>
    <property type="evidence" value="ECO:0007669"/>
    <property type="project" value="TreeGrafter"/>
</dbReference>
<dbReference type="GO" id="GO:0008690">
    <property type="term" value="F:3-deoxy-manno-octulosonate cytidylyltransferase activity"/>
    <property type="evidence" value="ECO:0007669"/>
    <property type="project" value="UniProtKB-UniRule"/>
</dbReference>
<dbReference type="GO" id="GO:0033468">
    <property type="term" value="P:CMP-keto-3-deoxy-D-manno-octulosonic acid biosynthetic process"/>
    <property type="evidence" value="ECO:0007669"/>
    <property type="project" value="UniProtKB-UniRule"/>
</dbReference>
<dbReference type="GO" id="GO:0009103">
    <property type="term" value="P:lipopolysaccharide biosynthetic process"/>
    <property type="evidence" value="ECO:0007669"/>
    <property type="project" value="UniProtKB-UniRule"/>
</dbReference>
<dbReference type="CDD" id="cd02517">
    <property type="entry name" value="CMP-KDO-Synthetase"/>
    <property type="match status" value="1"/>
</dbReference>
<dbReference type="FunFam" id="3.90.550.10:FF:000011">
    <property type="entry name" value="3-deoxy-manno-octulosonate cytidylyltransferase"/>
    <property type="match status" value="1"/>
</dbReference>
<dbReference type="Gene3D" id="3.90.550.10">
    <property type="entry name" value="Spore Coat Polysaccharide Biosynthesis Protein SpsA, Chain A"/>
    <property type="match status" value="1"/>
</dbReference>
<dbReference type="HAMAP" id="MF_00057">
    <property type="entry name" value="KdsB"/>
    <property type="match status" value="1"/>
</dbReference>
<dbReference type="InterPro" id="IPR003329">
    <property type="entry name" value="Cytidylyl_trans"/>
</dbReference>
<dbReference type="InterPro" id="IPR004528">
    <property type="entry name" value="KdsB"/>
</dbReference>
<dbReference type="InterPro" id="IPR029044">
    <property type="entry name" value="Nucleotide-diphossugar_trans"/>
</dbReference>
<dbReference type="NCBIfam" id="TIGR00466">
    <property type="entry name" value="kdsB"/>
    <property type="match status" value="1"/>
</dbReference>
<dbReference type="NCBIfam" id="NF003950">
    <property type="entry name" value="PRK05450.1-3"/>
    <property type="match status" value="1"/>
</dbReference>
<dbReference type="NCBIfam" id="NF003952">
    <property type="entry name" value="PRK05450.1-5"/>
    <property type="match status" value="1"/>
</dbReference>
<dbReference type="NCBIfam" id="NF009905">
    <property type="entry name" value="PRK13368.1"/>
    <property type="match status" value="1"/>
</dbReference>
<dbReference type="PANTHER" id="PTHR42866">
    <property type="entry name" value="3-DEOXY-MANNO-OCTULOSONATE CYTIDYLYLTRANSFERASE"/>
    <property type="match status" value="1"/>
</dbReference>
<dbReference type="PANTHER" id="PTHR42866:SF2">
    <property type="entry name" value="3-DEOXY-MANNO-OCTULOSONATE CYTIDYLYLTRANSFERASE, MITOCHONDRIAL"/>
    <property type="match status" value="1"/>
</dbReference>
<dbReference type="Pfam" id="PF02348">
    <property type="entry name" value="CTP_transf_3"/>
    <property type="match status" value="1"/>
</dbReference>
<dbReference type="SUPFAM" id="SSF53448">
    <property type="entry name" value="Nucleotide-diphospho-sugar transferases"/>
    <property type="match status" value="1"/>
</dbReference>
<name>KDSB_HISS1</name>
<sequence length="256" mass="28969">MNFTVIIPARYASSRLPGKPLADIAGKPMIQHVWEKAQQSGATRVVVATDYEEVARAVRGFDGEVCMTSSQHNSGTERLAEVIEKLAIPDDEIIVNIQGDEPLVPPVIVSQVAQNLQKYQVNMATLAVKIEDVEELFNPNVVKVLTDKDGYVLYFSRAVIPWDRDQFVQLGKADLSQLQLHQHYFRHIGIYAYRAGFIKQYVQWQPTTLEQIERLEQLRVLWNGERIHVELAKQAPAVGVDTVEDLEKVRSILSHV</sequence>
<organism>
    <name type="scientific">Histophilus somni (strain 129Pt)</name>
    <name type="common">Haemophilus somnus</name>
    <dbReference type="NCBI Taxonomy" id="205914"/>
    <lineage>
        <taxon>Bacteria</taxon>
        <taxon>Pseudomonadati</taxon>
        <taxon>Pseudomonadota</taxon>
        <taxon>Gammaproteobacteria</taxon>
        <taxon>Pasteurellales</taxon>
        <taxon>Pasteurellaceae</taxon>
        <taxon>Histophilus</taxon>
    </lineage>
</organism>
<gene>
    <name evidence="1" type="primary">kdsB</name>
    <name type="ordered locus">HS_0658</name>
</gene>
<comment type="function">
    <text evidence="1">Activates KDO (a required 8-carbon sugar) for incorporation into bacterial lipopolysaccharide in Gram-negative bacteria.</text>
</comment>
<comment type="catalytic activity">
    <reaction evidence="1">
        <text>3-deoxy-alpha-D-manno-oct-2-ulosonate + CTP = CMP-3-deoxy-beta-D-manno-octulosonate + diphosphate</text>
        <dbReference type="Rhea" id="RHEA:23448"/>
        <dbReference type="ChEBI" id="CHEBI:33019"/>
        <dbReference type="ChEBI" id="CHEBI:37563"/>
        <dbReference type="ChEBI" id="CHEBI:85986"/>
        <dbReference type="ChEBI" id="CHEBI:85987"/>
        <dbReference type="EC" id="2.7.7.38"/>
    </reaction>
</comment>
<comment type="pathway">
    <text evidence="1">Nucleotide-sugar biosynthesis; CMP-3-deoxy-D-manno-octulosonate biosynthesis; CMP-3-deoxy-D-manno-octulosonate from 3-deoxy-D-manno-octulosonate and CTP: step 1/1.</text>
</comment>
<comment type="pathway">
    <text evidence="1">Bacterial outer membrane biogenesis; lipopolysaccharide biosynthesis.</text>
</comment>
<comment type="subcellular location">
    <subcellularLocation>
        <location evidence="1">Cytoplasm</location>
    </subcellularLocation>
</comment>
<comment type="similarity">
    <text evidence="1">Belongs to the KdsB family.</text>
</comment>
<evidence type="ECO:0000255" key="1">
    <source>
        <dbReference type="HAMAP-Rule" id="MF_00057"/>
    </source>
</evidence>
<protein>
    <recommendedName>
        <fullName evidence="1">3-deoxy-manno-octulosonate cytidylyltransferase</fullName>
        <ecNumber evidence="1">2.7.7.38</ecNumber>
    </recommendedName>
    <alternativeName>
        <fullName evidence="1">CMP-2-keto-3-deoxyoctulosonic acid synthase</fullName>
        <shortName evidence="1">CKS</shortName>
        <shortName evidence="1">CMP-KDO synthase</shortName>
    </alternativeName>
</protein>
<accession>Q0I2X5</accession>
<keyword id="KW-0963">Cytoplasm</keyword>
<keyword id="KW-0448">Lipopolysaccharide biosynthesis</keyword>
<keyword id="KW-0548">Nucleotidyltransferase</keyword>
<keyword id="KW-0808">Transferase</keyword>